<keyword id="KW-0067">ATP-binding</keyword>
<keyword id="KW-0963">Cytoplasm</keyword>
<keyword id="KW-0227">DNA damage</keyword>
<keyword id="KW-0233">DNA recombination</keyword>
<keyword id="KW-0234">DNA repair</keyword>
<keyword id="KW-0238">DNA-binding</keyword>
<keyword id="KW-0547">Nucleotide-binding</keyword>
<keyword id="KW-0742">SOS response</keyword>
<proteinExistence type="inferred from homology"/>
<sequence>MAIDENKQKALAAALGQIEKQFGKGSIMRLGEDRSMDVETISTGSLSLDIALGAGGLPMGRIVEIYGPESSGKTTLTLQVIAAAQREGKTCAFIDAEHALDPVYARKLGVDIDNLLCSQPDTGEQALEICDALARSGAVDVIVVDSVAALTPKAEIEGEIGDSHMGLAARMMSQAMRKLAGNLKQSNTLLIFINQIRMKIGVMFGNPETTTGGNALKFYASVRLDIRRIGAVKEGDNVVGSETRVKVVKNKIAAPFKQAEFQILYGEGINFYGELVDLGVKEKLIEKAGAWYSYNGEKIGQGKANATTWLKENPATAKEIEKRVRELLLSNQNATPDFAVDDSEGVAETNEDF</sequence>
<organism>
    <name type="scientific">Salmonella typhi</name>
    <dbReference type="NCBI Taxonomy" id="90370"/>
    <lineage>
        <taxon>Bacteria</taxon>
        <taxon>Pseudomonadati</taxon>
        <taxon>Pseudomonadota</taxon>
        <taxon>Gammaproteobacteria</taxon>
        <taxon>Enterobacterales</taxon>
        <taxon>Enterobacteriaceae</taxon>
        <taxon>Salmonella</taxon>
    </lineage>
</organism>
<dbReference type="EMBL" id="AL513382">
    <property type="protein sequence ID" value="CAD05935.1"/>
    <property type="molecule type" value="Genomic_DNA"/>
</dbReference>
<dbReference type="EMBL" id="AE014613">
    <property type="protein sequence ID" value="AAO70291.1"/>
    <property type="molecule type" value="Genomic_DNA"/>
</dbReference>
<dbReference type="RefSeq" id="NP_457222.1">
    <property type="nucleotide sequence ID" value="NC_003198.1"/>
</dbReference>
<dbReference type="RefSeq" id="WP_000963150.1">
    <property type="nucleotide sequence ID" value="NZ_WSUR01000005.1"/>
</dbReference>
<dbReference type="SMR" id="P65978"/>
<dbReference type="STRING" id="220341.gene:17586845"/>
<dbReference type="KEGG" id="stt:t2730"/>
<dbReference type="KEGG" id="sty:STY2950"/>
<dbReference type="PATRIC" id="fig|220341.7.peg.3005"/>
<dbReference type="eggNOG" id="COG0468">
    <property type="taxonomic scope" value="Bacteria"/>
</dbReference>
<dbReference type="HOGENOM" id="CLU_040469_3_2_6"/>
<dbReference type="OMA" id="DSKMGLH"/>
<dbReference type="Proteomes" id="UP000000541">
    <property type="component" value="Chromosome"/>
</dbReference>
<dbReference type="Proteomes" id="UP000002670">
    <property type="component" value="Chromosome"/>
</dbReference>
<dbReference type="GO" id="GO:0005829">
    <property type="term" value="C:cytosol"/>
    <property type="evidence" value="ECO:0007669"/>
    <property type="project" value="TreeGrafter"/>
</dbReference>
<dbReference type="GO" id="GO:0005524">
    <property type="term" value="F:ATP binding"/>
    <property type="evidence" value="ECO:0007669"/>
    <property type="project" value="UniProtKB-UniRule"/>
</dbReference>
<dbReference type="GO" id="GO:0016887">
    <property type="term" value="F:ATP hydrolysis activity"/>
    <property type="evidence" value="ECO:0007669"/>
    <property type="project" value="InterPro"/>
</dbReference>
<dbReference type="GO" id="GO:0140664">
    <property type="term" value="F:ATP-dependent DNA damage sensor activity"/>
    <property type="evidence" value="ECO:0007669"/>
    <property type="project" value="InterPro"/>
</dbReference>
<dbReference type="GO" id="GO:0003684">
    <property type="term" value="F:damaged DNA binding"/>
    <property type="evidence" value="ECO:0007669"/>
    <property type="project" value="UniProtKB-UniRule"/>
</dbReference>
<dbReference type="GO" id="GO:0003697">
    <property type="term" value="F:single-stranded DNA binding"/>
    <property type="evidence" value="ECO:0007669"/>
    <property type="project" value="UniProtKB-UniRule"/>
</dbReference>
<dbReference type="GO" id="GO:0006310">
    <property type="term" value="P:DNA recombination"/>
    <property type="evidence" value="ECO:0007669"/>
    <property type="project" value="UniProtKB-UniRule"/>
</dbReference>
<dbReference type="GO" id="GO:0006281">
    <property type="term" value="P:DNA repair"/>
    <property type="evidence" value="ECO:0007669"/>
    <property type="project" value="UniProtKB-UniRule"/>
</dbReference>
<dbReference type="GO" id="GO:0009432">
    <property type="term" value="P:SOS response"/>
    <property type="evidence" value="ECO:0007669"/>
    <property type="project" value="UniProtKB-UniRule"/>
</dbReference>
<dbReference type="CDD" id="cd00983">
    <property type="entry name" value="RecA"/>
    <property type="match status" value="1"/>
</dbReference>
<dbReference type="FunFam" id="3.40.50.300:FF:000087">
    <property type="entry name" value="Recombinase RecA"/>
    <property type="match status" value="1"/>
</dbReference>
<dbReference type="Gene3D" id="3.40.50.300">
    <property type="entry name" value="P-loop containing nucleotide triphosphate hydrolases"/>
    <property type="match status" value="1"/>
</dbReference>
<dbReference type="HAMAP" id="MF_00268">
    <property type="entry name" value="RecA"/>
    <property type="match status" value="1"/>
</dbReference>
<dbReference type="InterPro" id="IPR003593">
    <property type="entry name" value="AAA+_ATPase"/>
</dbReference>
<dbReference type="InterPro" id="IPR013765">
    <property type="entry name" value="DNA_recomb/repair_RecA"/>
</dbReference>
<dbReference type="InterPro" id="IPR020584">
    <property type="entry name" value="DNA_recomb/repair_RecA_CS"/>
</dbReference>
<dbReference type="InterPro" id="IPR027417">
    <property type="entry name" value="P-loop_NTPase"/>
</dbReference>
<dbReference type="InterPro" id="IPR049261">
    <property type="entry name" value="RecA-like_C"/>
</dbReference>
<dbReference type="InterPro" id="IPR049428">
    <property type="entry name" value="RecA-like_N"/>
</dbReference>
<dbReference type="InterPro" id="IPR020588">
    <property type="entry name" value="RecA_ATP-bd"/>
</dbReference>
<dbReference type="InterPro" id="IPR023400">
    <property type="entry name" value="RecA_C_sf"/>
</dbReference>
<dbReference type="InterPro" id="IPR020587">
    <property type="entry name" value="RecA_monomer-monomer_interface"/>
</dbReference>
<dbReference type="NCBIfam" id="TIGR02012">
    <property type="entry name" value="tigrfam_recA"/>
    <property type="match status" value="1"/>
</dbReference>
<dbReference type="PANTHER" id="PTHR45900:SF1">
    <property type="entry name" value="MITOCHONDRIAL DNA REPAIR PROTEIN RECA HOMOLOG-RELATED"/>
    <property type="match status" value="1"/>
</dbReference>
<dbReference type="PANTHER" id="PTHR45900">
    <property type="entry name" value="RECA"/>
    <property type="match status" value="1"/>
</dbReference>
<dbReference type="Pfam" id="PF00154">
    <property type="entry name" value="RecA"/>
    <property type="match status" value="1"/>
</dbReference>
<dbReference type="Pfam" id="PF21096">
    <property type="entry name" value="RecA_C"/>
    <property type="match status" value="1"/>
</dbReference>
<dbReference type="PRINTS" id="PR00142">
    <property type="entry name" value="RECA"/>
</dbReference>
<dbReference type="SMART" id="SM00382">
    <property type="entry name" value="AAA"/>
    <property type="match status" value="1"/>
</dbReference>
<dbReference type="SUPFAM" id="SSF52540">
    <property type="entry name" value="P-loop containing nucleoside triphosphate hydrolases"/>
    <property type="match status" value="1"/>
</dbReference>
<dbReference type="SUPFAM" id="SSF54752">
    <property type="entry name" value="RecA protein, C-terminal domain"/>
    <property type="match status" value="1"/>
</dbReference>
<dbReference type="PROSITE" id="PS00321">
    <property type="entry name" value="RECA_1"/>
    <property type="match status" value="1"/>
</dbReference>
<dbReference type="PROSITE" id="PS50162">
    <property type="entry name" value="RECA_2"/>
    <property type="match status" value="1"/>
</dbReference>
<dbReference type="PROSITE" id="PS50163">
    <property type="entry name" value="RECA_3"/>
    <property type="match status" value="1"/>
</dbReference>
<comment type="function">
    <text evidence="2">Can catalyze the hydrolysis of ATP in the presence of single-stranded DNA, the ATP-dependent uptake of single-stranded DNA by duplex DNA, and the ATP-dependent hybridization of homologous single-stranded DNAs. It interacts with LexA causing its activation and leading to its autocatalytic cleavage.</text>
</comment>
<comment type="subcellular location">
    <subcellularLocation>
        <location evidence="2">Cytoplasm</location>
    </subcellularLocation>
</comment>
<comment type="similarity">
    <text evidence="2">Belongs to the RecA family.</text>
</comment>
<gene>
    <name evidence="2" type="primary">recA</name>
    <name type="ordered locus">STY2950</name>
    <name type="ordered locus">t2730</name>
</gene>
<protein>
    <recommendedName>
        <fullName evidence="2">Protein RecA</fullName>
    </recommendedName>
    <alternativeName>
        <fullName evidence="2">Recombinase A</fullName>
    </alternativeName>
</protein>
<feature type="initiator methionine" description="Removed" evidence="1">
    <location>
        <position position="1"/>
    </location>
</feature>
<feature type="chain" id="PRO_0000122828" description="Protein RecA">
    <location>
        <begin position="2"/>
        <end position="353"/>
    </location>
</feature>
<feature type="binding site" evidence="2">
    <location>
        <begin position="67"/>
        <end position="74"/>
    </location>
    <ligand>
        <name>ATP</name>
        <dbReference type="ChEBI" id="CHEBI:30616"/>
    </ligand>
</feature>
<accession>P65978</accession>
<accession>Q8XET0</accession>
<reference key="1">
    <citation type="journal article" date="2001" name="Nature">
        <title>Complete genome sequence of a multiple drug resistant Salmonella enterica serovar Typhi CT18.</title>
        <authorList>
            <person name="Parkhill J."/>
            <person name="Dougan G."/>
            <person name="James K.D."/>
            <person name="Thomson N.R."/>
            <person name="Pickard D."/>
            <person name="Wain J."/>
            <person name="Churcher C.M."/>
            <person name="Mungall K.L."/>
            <person name="Bentley S.D."/>
            <person name="Holden M.T.G."/>
            <person name="Sebaihia M."/>
            <person name="Baker S."/>
            <person name="Basham D."/>
            <person name="Brooks K."/>
            <person name="Chillingworth T."/>
            <person name="Connerton P."/>
            <person name="Cronin A."/>
            <person name="Davis P."/>
            <person name="Davies R.M."/>
            <person name="Dowd L."/>
            <person name="White N."/>
            <person name="Farrar J."/>
            <person name="Feltwell T."/>
            <person name="Hamlin N."/>
            <person name="Haque A."/>
            <person name="Hien T.T."/>
            <person name="Holroyd S."/>
            <person name="Jagels K."/>
            <person name="Krogh A."/>
            <person name="Larsen T.S."/>
            <person name="Leather S."/>
            <person name="Moule S."/>
            <person name="O'Gaora P."/>
            <person name="Parry C."/>
            <person name="Quail M.A."/>
            <person name="Rutherford K.M."/>
            <person name="Simmonds M."/>
            <person name="Skelton J."/>
            <person name="Stevens K."/>
            <person name="Whitehead S."/>
            <person name="Barrell B.G."/>
        </authorList>
    </citation>
    <scope>NUCLEOTIDE SEQUENCE [LARGE SCALE GENOMIC DNA]</scope>
    <source>
        <strain>CT18</strain>
    </source>
</reference>
<reference key="2">
    <citation type="journal article" date="2003" name="J. Bacteriol.">
        <title>Comparative genomics of Salmonella enterica serovar Typhi strains Ty2 and CT18.</title>
        <authorList>
            <person name="Deng W."/>
            <person name="Liou S.-R."/>
            <person name="Plunkett G. III"/>
            <person name="Mayhew G.F."/>
            <person name="Rose D.J."/>
            <person name="Burland V."/>
            <person name="Kodoyianni V."/>
            <person name="Schwartz D.C."/>
            <person name="Blattner F.R."/>
        </authorList>
    </citation>
    <scope>NUCLEOTIDE SEQUENCE [LARGE SCALE GENOMIC DNA]</scope>
    <source>
        <strain>ATCC 700931 / Ty2</strain>
    </source>
</reference>
<evidence type="ECO:0000250" key="1"/>
<evidence type="ECO:0000255" key="2">
    <source>
        <dbReference type="HAMAP-Rule" id="MF_00268"/>
    </source>
</evidence>
<name>RECA_SALTI</name>